<name>AIS_ECO81</name>
<proteinExistence type="inferred from homology"/>
<feature type="signal peptide" evidence="1">
    <location>
        <begin position="1"/>
        <end position="25"/>
    </location>
</feature>
<feature type="chain" id="PRO_0000380571" description="Lipopolysaccharide core heptose(II)-phosphate phosphatase">
    <location>
        <begin position="26"/>
        <end position="200"/>
    </location>
</feature>
<protein>
    <recommendedName>
        <fullName evidence="1">Lipopolysaccharide core heptose(II)-phosphate phosphatase</fullName>
        <ecNumber evidence="1">3.1.3.-</ecNumber>
    </recommendedName>
</protein>
<accession>B7MXD4</accession>
<keyword id="KW-0378">Hydrolase</keyword>
<keyword id="KW-0574">Periplasm</keyword>
<keyword id="KW-0732">Signal</keyword>
<reference key="1">
    <citation type="journal article" date="2009" name="PLoS Genet.">
        <title>Organised genome dynamics in the Escherichia coli species results in highly diverse adaptive paths.</title>
        <authorList>
            <person name="Touchon M."/>
            <person name="Hoede C."/>
            <person name="Tenaillon O."/>
            <person name="Barbe V."/>
            <person name="Baeriswyl S."/>
            <person name="Bidet P."/>
            <person name="Bingen E."/>
            <person name="Bonacorsi S."/>
            <person name="Bouchier C."/>
            <person name="Bouvet O."/>
            <person name="Calteau A."/>
            <person name="Chiapello H."/>
            <person name="Clermont O."/>
            <person name="Cruveiller S."/>
            <person name="Danchin A."/>
            <person name="Diard M."/>
            <person name="Dossat C."/>
            <person name="Karoui M.E."/>
            <person name="Frapy E."/>
            <person name="Garry L."/>
            <person name="Ghigo J.M."/>
            <person name="Gilles A.M."/>
            <person name="Johnson J."/>
            <person name="Le Bouguenec C."/>
            <person name="Lescat M."/>
            <person name="Mangenot S."/>
            <person name="Martinez-Jehanne V."/>
            <person name="Matic I."/>
            <person name="Nassif X."/>
            <person name="Oztas S."/>
            <person name="Petit M.A."/>
            <person name="Pichon C."/>
            <person name="Rouy Z."/>
            <person name="Ruf C.S."/>
            <person name="Schneider D."/>
            <person name="Tourret J."/>
            <person name="Vacherie B."/>
            <person name="Vallenet D."/>
            <person name="Medigue C."/>
            <person name="Rocha E.P.C."/>
            <person name="Denamur E."/>
        </authorList>
    </citation>
    <scope>NUCLEOTIDE SEQUENCE [LARGE SCALE GENOMIC DNA]</scope>
    <source>
        <strain>ED1a</strain>
    </source>
</reference>
<evidence type="ECO:0000255" key="1">
    <source>
        <dbReference type="HAMAP-Rule" id="MF_01868"/>
    </source>
</evidence>
<gene>
    <name evidence="1" type="primary">ais</name>
    <name type="ordered locus">ECED1_2718</name>
</gene>
<sequence>MLAFCRSSLKSKKYFIILLALAAIAGLGTHAAWSSNGLPRIDNKTLARLAQQHPVVVLFRHAERCDRSTNQCLSDKTGITVKGTQDARELGNAFSADIPDFDLYSSNTVRTIQSATWFSAGKKLTVDKRFLQCGNEIYSAIKDLQRKAPDKNIVIFTHNHCLTYIAKDKRDATFKPDYLDGLVMHVEKGKVYLDGEFVNH</sequence>
<dbReference type="EC" id="3.1.3.-" evidence="1"/>
<dbReference type="EMBL" id="CU928162">
    <property type="protein sequence ID" value="CAR08750.1"/>
    <property type="molecule type" value="Genomic_DNA"/>
</dbReference>
<dbReference type="RefSeq" id="WP_000879110.1">
    <property type="nucleotide sequence ID" value="NC_011745.1"/>
</dbReference>
<dbReference type="SMR" id="B7MXD4"/>
<dbReference type="KEGG" id="ecq:ECED1_2718"/>
<dbReference type="HOGENOM" id="CLU_106705_1_0_6"/>
<dbReference type="UniPathway" id="UPA00451"/>
<dbReference type="Proteomes" id="UP000000748">
    <property type="component" value="Chromosome"/>
</dbReference>
<dbReference type="GO" id="GO:0042597">
    <property type="term" value="C:periplasmic space"/>
    <property type="evidence" value="ECO:0007669"/>
    <property type="project" value="UniProtKB-SubCell"/>
</dbReference>
<dbReference type="GO" id="GO:0016791">
    <property type="term" value="F:phosphatase activity"/>
    <property type="evidence" value="ECO:0007669"/>
    <property type="project" value="UniProtKB-UniRule"/>
</dbReference>
<dbReference type="GO" id="GO:0008653">
    <property type="term" value="P:lipopolysaccharide metabolic process"/>
    <property type="evidence" value="ECO:0007669"/>
    <property type="project" value="UniProtKB-UniRule"/>
</dbReference>
<dbReference type="CDD" id="cd07040">
    <property type="entry name" value="HP"/>
    <property type="match status" value="1"/>
</dbReference>
<dbReference type="Gene3D" id="3.40.50.1240">
    <property type="entry name" value="Phosphoglycerate mutase-like"/>
    <property type="match status" value="1"/>
</dbReference>
<dbReference type="HAMAP" id="MF_01868">
    <property type="entry name" value="Ais"/>
    <property type="match status" value="1"/>
</dbReference>
<dbReference type="InterPro" id="IPR013078">
    <property type="entry name" value="His_Pase_superF_clade-1"/>
</dbReference>
<dbReference type="InterPro" id="IPR029033">
    <property type="entry name" value="His_PPase_superfam"/>
</dbReference>
<dbReference type="InterPro" id="IPR011310">
    <property type="entry name" value="LipoPS_heptP_Pase"/>
</dbReference>
<dbReference type="NCBIfam" id="NF011945">
    <property type="entry name" value="PRK15416.1"/>
    <property type="match status" value="1"/>
</dbReference>
<dbReference type="Pfam" id="PF00300">
    <property type="entry name" value="His_Phos_1"/>
    <property type="match status" value="1"/>
</dbReference>
<dbReference type="PIRSF" id="PIRSF011416">
    <property type="entry name" value="Ais-TraG-AfrS"/>
    <property type="match status" value="1"/>
</dbReference>
<dbReference type="SUPFAM" id="SSF53254">
    <property type="entry name" value="Phosphoglycerate mutase-like"/>
    <property type="match status" value="1"/>
</dbReference>
<comment type="function">
    <text evidence="1">Catalyzes the dephosphorylation of heptose(II) of the outer membrane lipopolysaccharide core.</text>
</comment>
<comment type="pathway">
    <text evidence="1">Bacterial outer membrane biogenesis; lipopolysaccharide metabolism.</text>
</comment>
<comment type="subcellular location">
    <subcellularLocation>
        <location evidence="1">Periplasm</location>
    </subcellularLocation>
</comment>
<comment type="similarity">
    <text evidence="1">Belongs to the phosphoglycerate mutase family. Ais subfamily.</text>
</comment>
<organism>
    <name type="scientific">Escherichia coli O81 (strain ED1a)</name>
    <dbReference type="NCBI Taxonomy" id="585397"/>
    <lineage>
        <taxon>Bacteria</taxon>
        <taxon>Pseudomonadati</taxon>
        <taxon>Pseudomonadota</taxon>
        <taxon>Gammaproteobacteria</taxon>
        <taxon>Enterobacterales</taxon>
        <taxon>Enterobacteriaceae</taxon>
        <taxon>Escherichia</taxon>
    </lineage>
</organism>